<proteinExistence type="inferred from homology"/>
<feature type="chain" id="PRO_0000118072" description="NADH-ubiquinone oxidoreductase chain 5">
    <location>
        <begin position="1"/>
        <end position="527"/>
    </location>
</feature>
<feature type="transmembrane region" description="Helical" evidence="2">
    <location>
        <begin position="3"/>
        <end position="23"/>
    </location>
</feature>
<feature type="transmembrane region" description="Helical" evidence="2">
    <location>
        <begin position="43"/>
        <end position="63"/>
    </location>
</feature>
<feature type="transmembrane region" description="Helical" evidence="2">
    <location>
        <begin position="75"/>
        <end position="95"/>
    </location>
</feature>
<feature type="transmembrane region" description="Helical" evidence="2">
    <location>
        <begin position="98"/>
        <end position="118"/>
    </location>
</feature>
<feature type="transmembrane region" description="Helical" evidence="2">
    <location>
        <begin position="141"/>
        <end position="161"/>
    </location>
</feature>
<feature type="transmembrane region" description="Helical" evidence="2">
    <location>
        <begin position="168"/>
        <end position="188"/>
    </location>
</feature>
<feature type="transmembrane region" description="Helical" evidence="2">
    <location>
        <begin position="197"/>
        <end position="217"/>
    </location>
</feature>
<feature type="transmembrane region" description="Helical" evidence="2">
    <location>
        <begin position="226"/>
        <end position="246"/>
    </location>
</feature>
<feature type="transmembrane region" description="Helical" evidence="2">
    <location>
        <begin position="263"/>
        <end position="283"/>
    </location>
</feature>
<feature type="transmembrane region" description="Helical" evidence="2">
    <location>
        <begin position="318"/>
        <end position="338"/>
    </location>
</feature>
<feature type="transmembrane region" description="Helical" evidence="2">
    <location>
        <begin position="357"/>
        <end position="377"/>
    </location>
</feature>
<feature type="transmembrane region" description="Helical" evidence="2">
    <location>
        <begin position="398"/>
        <end position="418"/>
    </location>
</feature>
<feature type="transmembrane region" description="Helical" evidence="2">
    <location>
        <begin position="432"/>
        <end position="452"/>
    </location>
</feature>
<feature type="transmembrane region" description="Helical" evidence="2">
    <location>
        <begin position="507"/>
        <end position="527"/>
    </location>
</feature>
<feature type="sequence variant" description="In strain: CB4854." evidence="3">
    <original>F</original>
    <variation>L</variation>
    <location>
        <position position="94"/>
    </location>
</feature>
<protein>
    <recommendedName>
        <fullName>NADH-ubiquinone oxidoreductase chain 5</fullName>
        <ecNumber>7.1.1.2</ecNumber>
    </recommendedName>
    <alternativeName>
        <fullName>NADH dehydrogenase subunit 5</fullName>
    </alternativeName>
</protein>
<reference key="1">
    <citation type="journal article" date="1992" name="Genetics">
        <title>The mitochondrial genomes of two nematodes, Caenorhabditis elegans and Ascaris suum.</title>
        <authorList>
            <person name="Okimoto R."/>
            <person name="Macfarlane J.L."/>
            <person name="Clary D.O."/>
            <person name="Wolstenholme D.R."/>
        </authorList>
    </citation>
    <scope>NUCLEOTIDE SEQUENCE [LARGE SCALE GENOMIC DNA]</scope>
    <source>
        <strain>Bristol N2</strain>
    </source>
</reference>
<reference key="2">
    <citation type="journal article" date="2003" name="Mol. Biol. Evol.">
        <title>Phylogenetics in Caenorhabditis elegans: an analysis of divergence and outcrossing.</title>
        <authorList>
            <person name="Denver D.R."/>
            <person name="Morris K."/>
            <person name="Thomas W.K."/>
        </authorList>
    </citation>
    <scope>NUCLEOTIDE SEQUENCE [GENOMIC DNA] OF 1-120</scope>
    <scope>VARIANT LEU-94</scope>
    <source>
        <strain>AB1</strain>
        <strain>AB2</strain>
        <strain>Bristol N2</strain>
        <strain>CB4852</strain>
        <strain>CB4853</strain>
        <strain>CB4854</strain>
        <strain>CB4855</strain>
        <strain>CB4856</strain>
        <strain>CB4857</strain>
        <strain>CB4858</strain>
        <strain>KR314</strain>
        <strain>PB303</strain>
        <strain>PB306</strain>
        <strain>RW7000</strain>
        <strain>TR403</strain>
    </source>
</reference>
<reference key="3">
    <citation type="journal article" date="1990" name="Nucleic Acids Res.">
        <title>Evidence for the frequent use of TTG as the translation initiation codon of mitochondrial protein genes in the nematodes, Ascaris suum and Caenorhabditis elegans.</title>
        <authorList>
            <person name="Okimoto R."/>
            <person name="Macfarlane J.L."/>
            <person name="Wolstenholme D.R."/>
        </authorList>
    </citation>
    <scope>NUCLEOTIDE SEQUENCE [GENOMIC DNA] OF 1-25</scope>
</reference>
<dbReference type="EC" id="7.1.1.2"/>
<dbReference type="EMBL" id="X54252">
    <property type="protein sequence ID" value="CAA38162.1"/>
    <property type="molecule type" value="Genomic_DNA"/>
</dbReference>
<dbReference type="EMBL" id="AY171208">
    <property type="protein sequence ID" value="AAO16356.1"/>
    <property type="molecule type" value="Genomic_DNA"/>
</dbReference>
<dbReference type="EMBL" id="AY171209">
    <property type="protein sequence ID" value="AAO16358.1"/>
    <property type="molecule type" value="Genomic_DNA"/>
</dbReference>
<dbReference type="EMBL" id="AY171210">
    <property type="protein sequence ID" value="AAO16360.1"/>
    <property type="molecule type" value="Genomic_DNA"/>
</dbReference>
<dbReference type="EMBL" id="AY171211">
    <property type="protein sequence ID" value="AAO16362.1"/>
    <property type="molecule type" value="Genomic_DNA"/>
</dbReference>
<dbReference type="EMBL" id="AY171212">
    <property type="protein sequence ID" value="AAO16364.1"/>
    <property type="molecule type" value="Genomic_DNA"/>
</dbReference>
<dbReference type="EMBL" id="AY171213">
    <property type="protein sequence ID" value="AAO16366.1"/>
    <property type="molecule type" value="Genomic_DNA"/>
</dbReference>
<dbReference type="EMBL" id="AY171214">
    <property type="protein sequence ID" value="AAO16368.1"/>
    <property type="molecule type" value="Genomic_DNA"/>
</dbReference>
<dbReference type="EMBL" id="AY171215">
    <property type="protein sequence ID" value="AAO16370.1"/>
    <property type="molecule type" value="Genomic_DNA"/>
</dbReference>
<dbReference type="EMBL" id="AY171216">
    <property type="protein sequence ID" value="AAO16372.1"/>
    <property type="molecule type" value="Genomic_DNA"/>
</dbReference>
<dbReference type="EMBL" id="AY171217">
    <property type="protein sequence ID" value="AAO16374.1"/>
    <property type="molecule type" value="Genomic_DNA"/>
</dbReference>
<dbReference type="EMBL" id="AY171218">
    <property type="protein sequence ID" value="AAO16376.1"/>
    <property type="molecule type" value="Genomic_DNA"/>
</dbReference>
<dbReference type="EMBL" id="AY171219">
    <property type="protein sequence ID" value="AAO16378.1"/>
    <property type="molecule type" value="Genomic_DNA"/>
</dbReference>
<dbReference type="EMBL" id="AY171220">
    <property type="protein sequence ID" value="AAO16380.1"/>
    <property type="molecule type" value="Genomic_DNA"/>
</dbReference>
<dbReference type="EMBL" id="AY171221">
    <property type="protein sequence ID" value="AAO16382.1"/>
    <property type="molecule type" value="Genomic_DNA"/>
</dbReference>
<dbReference type="EMBL" id="AY171222">
    <property type="protein sequence ID" value="AAO16384.1"/>
    <property type="molecule type" value="Genomic_DNA"/>
</dbReference>
<dbReference type="PIR" id="S26037">
    <property type="entry name" value="S26037"/>
</dbReference>
<dbReference type="RefSeq" id="NP_006964.1">
    <property type="nucleotide sequence ID" value="NC_001328.1"/>
</dbReference>
<dbReference type="SMR" id="P24896"/>
<dbReference type="BioGRID" id="57541">
    <property type="interactions" value="1"/>
</dbReference>
<dbReference type="FunCoup" id="P24896">
    <property type="interactions" value="130"/>
</dbReference>
<dbReference type="STRING" id="6239.MTCE.35.1"/>
<dbReference type="PaxDb" id="6239-MTCE.35"/>
<dbReference type="EnsemblMetazoa" id="MTCE.35.1">
    <property type="protein sequence ID" value="MTCE.35.1"/>
    <property type="gene ID" value="WBGene00010967"/>
</dbReference>
<dbReference type="GeneID" id="2565703"/>
<dbReference type="KEGG" id="cel:KEF34_p01"/>
<dbReference type="AGR" id="WB:WBGene00010967"/>
<dbReference type="CTD" id="4540"/>
<dbReference type="WormBase" id="MTCE.35">
    <property type="protein sequence ID" value="CE35353"/>
    <property type="gene ID" value="WBGene00010967"/>
    <property type="gene designation" value="nduo-5"/>
</dbReference>
<dbReference type="eggNOG" id="KOG4668">
    <property type="taxonomic scope" value="Eukaryota"/>
</dbReference>
<dbReference type="GeneTree" id="ENSGT00730000111303"/>
<dbReference type="HOGENOM" id="CLU_517039_0_0_1"/>
<dbReference type="InParanoid" id="P24896"/>
<dbReference type="PhylomeDB" id="P24896"/>
<dbReference type="PRO" id="PR:P24896"/>
<dbReference type="Proteomes" id="UP000001940">
    <property type="component" value="Mitochondrion"/>
</dbReference>
<dbReference type="Bgee" id="WBGene00010967">
    <property type="expression patterns" value="Expressed in pharyngeal muscle cell (C elegans) and 3 other cell types or tissues"/>
</dbReference>
<dbReference type="GO" id="GO:0005743">
    <property type="term" value="C:mitochondrial inner membrane"/>
    <property type="evidence" value="ECO:0007669"/>
    <property type="project" value="UniProtKB-SubCell"/>
</dbReference>
<dbReference type="GO" id="GO:0045271">
    <property type="term" value="C:respiratory chain complex I"/>
    <property type="evidence" value="ECO:0000250"/>
    <property type="project" value="WormBase"/>
</dbReference>
<dbReference type="GO" id="GO:0008137">
    <property type="term" value="F:NADH dehydrogenase (ubiquinone) activity"/>
    <property type="evidence" value="ECO:0000303"/>
    <property type="project" value="UniProtKB"/>
</dbReference>
<dbReference type="GO" id="GO:0015990">
    <property type="term" value="P:electron transport coupled proton transport"/>
    <property type="evidence" value="ECO:0000318"/>
    <property type="project" value="GO_Central"/>
</dbReference>
<dbReference type="GO" id="GO:0006120">
    <property type="term" value="P:mitochondrial electron transport, NADH to ubiquinone"/>
    <property type="evidence" value="ECO:0000303"/>
    <property type="project" value="UniProtKB"/>
</dbReference>
<dbReference type="InterPro" id="IPR001750">
    <property type="entry name" value="ND/Mrp_TM"/>
</dbReference>
<dbReference type="InterPro" id="IPR003945">
    <property type="entry name" value="NU5C-like"/>
</dbReference>
<dbReference type="PANTHER" id="PTHR42829">
    <property type="entry name" value="NADH-UBIQUINONE OXIDOREDUCTASE CHAIN 5"/>
    <property type="match status" value="1"/>
</dbReference>
<dbReference type="PANTHER" id="PTHR42829:SF2">
    <property type="entry name" value="NADH-UBIQUINONE OXIDOREDUCTASE CHAIN 5"/>
    <property type="match status" value="1"/>
</dbReference>
<dbReference type="Pfam" id="PF00361">
    <property type="entry name" value="Proton_antipo_M"/>
    <property type="match status" value="1"/>
</dbReference>
<dbReference type="PRINTS" id="PR01434">
    <property type="entry name" value="NADHDHGNASE5"/>
</dbReference>
<name>NU5M_CAEEL</name>
<comment type="function">
    <text evidence="1">Core subunit of the mitochondrial membrane respiratory chain NADH dehydrogenase (Complex I) that is believed to belong to the minimal assembly required for catalysis. Complex I functions in the transfer of electrons from NADH to the respiratory chain. The immediate electron acceptor for the enzyme is believed to be ubiquinone (By similarity).</text>
</comment>
<comment type="catalytic activity">
    <reaction>
        <text>a ubiquinone + NADH + 5 H(+)(in) = a ubiquinol + NAD(+) + 4 H(+)(out)</text>
        <dbReference type="Rhea" id="RHEA:29091"/>
        <dbReference type="Rhea" id="RHEA-COMP:9565"/>
        <dbReference type="Rhea" id="RHEA-COMP:9566"/>
        <dbReference type="ChEBI" id="CHEBI:15378"/>
        <dbReference type="ChEBI" id="CHEBI:16389"/>
        <dbReference type="ChEBI" id="CHEBI:17976"/>
        <dbReference type="ChEBI" id="CHEBI:57540"/>
        <dbReference type="ChEBI" id="CHEBI:57945"/>
        <dbReference type="EC" id="7.1.1.2"/>
    </reaction>
</comment>
<comment type="subcellular location">
    <subcellularLocation>
        <location evidence="1">Mitochondrion inner membrane</location>
        <topology evidence="1">Multi-pass membrane protein</topology>
    </subcellularLocation>
</comment>
<comment type="similarity">
    <text evidence="4">Belongs to the complex I subunit 5 family.</text>
</comment>
<accession>P24896</accession>
<organism>
    <name type="scientific">Caenorhabditis elegans</name>
    <dbReference type="NCBI Taxonomy" id="6239"/>
    <lineage>
        <taxon>Eukaryota</taxon>
        <taxon>Metazoa</taxon>
        <taxon>Ecdysozoa</taxon>
        <taxon>Nematoda</taxon>
        <taxon>Chromadorea</taxon>
        <taxon>Rhabditida</taxon>
        <taxon>Rhabditina</taxon>
        <taxon>Rhabditomorpha</taxon>
        <taxon>Rhabditoidea</taxon>
        <taxon>Rhabditidae</taxon>
        <taxon>Peloderinae</taxon>
        <taxon>Caenorhabditis</taxon>
    </lineage>
</organism>
<keyword id="KW-0249">Electron transport</keyword>
<keyword id="KW-0472">Membrane</keyword>
<keyword id="KW-0496">Mitochondrion</keyword>
<keyword id="KW-0999">Mitochondrion inner membrane</keyword>
<keyword id="KW-0520">NAD</keyword>
<keyword id="KW-1185">Reference proteome</keyword>
<keyword id="KW-0679">Respiratory chain</keyword>
<keyword id="KW-1278">Translocase</keyword>
<keyword id="KW-0812">Transmembrane</keyword>
<keyword id="KW-1133">Transmembrane helix</keyword>
<keyword id="KW-0813">Transport</keyword>
<keyword id="KW-0830">Ubiquinone</keyword>
<geneLocation type="mitochondrion"/>
<gene>
    <name evidence="5" type="primary">nduo-5</name>
    <name evidence="5" type="synonym">nd5</name>
    <name evidence="5" type="ORF">MTCE.35</name>
</gene>
<sequence length="527" mass="61156">MNISIFLIGFVFFMGGISVWLMPTFKLGIFFLEWDFLSLKFNFYFNSILFSFILFLVTFSVLVFSTYYLNSELNFNYYYFVLLIFVGSMFSLNFSNSIFTMLLSWDLLGISSFFLVLFYNNWDSCSGAMNTALTNRLGDYFMFVFFGLSVFSGYYFLSFSMFSSYMSLLLLLTAFTKSAQFPFSSWLPKAMSAPTPVSSLVHSSTLVTAGLILLMNFNNLVMQKDFISFVLIIGLFTMFFSSLASLVEEDLKKVVALSTLSQMGFSMVTLGLGLSFISFIHLVSHALFKSCLFMQVGYIIHCSFGQQDGRNYSNNGNLPNFIQLQMLVTLFCLCGLIFSSGAVSKDFILELFFSNNYMMFFSLMFFVSVFLTFGYSFRLWKSFFLSFNKVMNHYSSTVFMNFLSLVLVIFSISFLWWMNFNLLNIPSLFLYVDFFGPLVFLFMMIFLSFLILKMLFKELMYKFLVDYLAKNSIYKMKNLKFMDLFLNNINSKGYTLFLSSGMFKNYYLKSLNFNSVVVLIFIFFMIC</sequence>
<evidence type="ECO:0000250" key="1"/>
<evidence type="ECO:0000255" key="2"/>
<evidence type="ECO:0000269" key="3">
    <source>
    </source>
</evidence>
<evidence type="ECO:0000305" key="4"/>
<evidence type="ECO:0000312" key="5">
    <source>
        <dbReference type="WormBase" id="MTCE.35"/>
    </source>
</evidence>